<comment type="function">
    <text evidence="1">Catalyzes the isomerization between 2-isopropylmalate and 3-isopropylmalate, via the formation of 2-isopropylmaleate.</text>
</comment>
<comment type="catalytic activity">
    <reaction evidence="1">
        <text>(2R,3S)-3-isopropylmalate = (2S)-2-isopropylmalate</text>
        <dbReference type="Rhea" id="RHEA:32287"/>
        <dbReference type="ChEBI" id="CHEBI:1178"/>
        <dbReference type="ChEBI" id="CHEBI:35121"/>
        <dbReference type="EC" id="4.2.1.33"/>
    </reaction>
</comment>
<comment type="pathway">
    <text evidence="1">Amino-acid biosynthesis; L-leucine biosynthesis; L-leucine from 3-methyl-2-oxobutanoate: step 2/4.</text>
</comment>
<comment type="subunit">
    <text evidence="1">Heterodimer of LeuC and LeuD.</text>
</comment>
<comment type="similarity">
    <text evidence="1">Belongs to the LeuD family. LeuD type 1 subfamily.</text>
</comment>
<name>LEUD_HISS2</name>
<feature type="chain" id="PRO_1000084254" description="3-isopropylmalate dehydratase small subunit">
    <location>
        <begin position="1"/>
        <end position="200"/>
    </location>
</feature>
<proteinExistence type="inferred from homology"/>
<protein>
    <recommendedName>
        <fullName evidence="1">3-isopropylmalate dehydratase small subunit</fullName>
        <ecNumber evidence="1">4.2.1.33</ecNumber>
    </recommendedName>
    <alternativeName>
        <fullName evidence="1">Alpha-IPM isomerase</fullName>
        <shortName evidence="1">IPMI</shortName>
    </alternativeName>
    <alternativeName>
        <fullName evidence="1">Isopropylmalate isomerase</fullName>
    </alternativeName>
</protein>
<gene>
    <name evidence="1" type="primary">leuD</name>
    <name type="ordered locus">HSM_0714</name>
</gene>
<dbReference type="EC" id="4.2.1.33" evidence="1"/>
<dbReference type="EMBL" id="CP000947">
    <property type="protein sequence ID" value="ACA32379.1"/>
    <property type="molecule type" value="Genomic_DNA"/>
</dbReference>
<dbReference type="RefSeq" id="WP_011608545.1">
    <property type="nucleotide sequence ID" value="NC_010519.1"/>
</dbReference>
<dbReference type="SMR" id="B0USF3"/>
<dbReference type="STRING" id="228400.HSM_0714"/>
<dbReference type="GeneID" id="31487000"/>
<dbReference type="KEGG" id="hsm:HSM_0714"/>
<dbReference type="HOGENOM" id="CLU_081378_0_3_6"/>
<dbReference type="UniPathway" id="UPA00048">
    <property type="reaction ID" value="UER00071"/>
</dbReference>
<dbReference type="GO" id="GO:0009316">
    <property type="term" value="C:3-isopropylmalate dehydratase complex"/>
    <property type="evidence" value="ECO:0007669"/>
    <property type="project" value="InterPro"/>
</dbReference>
<dbReference type="GO" id="GO:0003861">
    <property type="term" value="F:3-isopropylmalate dehydratase activity"/>
    <property type="evidence" value="ECO:0007669"/>
    <property type="project" value="UniProtKB-UniRule"/>
</dbReference>
<dbReference type="GO" id="GO:0009098">
    <property type="term" value="P:L-leucine biosynthetic process"/>
    <property type="evidence" value="ECO:0007669"/>
    <property type="project" value="UniProtKB-UniRule"/>
</dbReference>
<dbReference type="CDD" id="cd01577">
    <property type="entry name" value="IPMI_Swivel"/>
    <property type="match status" value="1"/>
</dbReference>
<dbReference type="FunFam" id="3.20.19.10:FF:000003">
    <property type="entry name" value="3-isopropylmalate dehydratase small subunit"/>
    <property type="match status" value="1"/>
</dbReference>
<dbReference type="Gene3D" id="3.20.19.10">
    <property type="entry name" value="Aconitase, domain 4"/>
    <property type="match status" value="1"/>
</dbReference>
<dbReference type="HAMAP" id="MF_01031">
    <property type="entry name" value="LeuD_type1"/>
    <property type="match status" value="1"/>
</dbReference>
<dbReference type="InterPro" id="IPR004431">
    <property type="entry name" value="3-IsopropMal_deHydase_ssu"/>
</dbReference>
<dbReference type="InterPro" id="IPR015928">
    <property type="entry name" value="Aconitase/3IPM_dehydase_swvl"/>
</dbReference>
<dbReference type="InterPro" id="IPR000573">
    <property type="entry name" value="AconitaseA/IPMdHydase_ssu_swvl"/>
</dbReference>
<dbReference type="InterPro" id="IPR033940">
    <property type="entry name" value="IPMI_Swivel"/>
</dbReference>
<dbReference type="InterPro" id="IPR050075">
    <property type="entry name" value="LeuD"/>
</dbReference>
<dbReference type="NCBIfam" id="TIGR00171">
    <property type="entry name" value="leuD"/>
    <property type="match status" value="1"/>
</dbReference>
<dbReference type="NCBIfam" id="NF002458">
    <property type="entry name" value="PRK01641.1"/>
    <property type="match status" value="1"/>
</dbReference>
<dbReference type="PANTHER" id="PTHR43345:SF5">
    <property type="entry name" value="3-ISOPROPYLMALATE DEHYDRATASE SMALL SUBUNIT"/>
    <property type="match status" value="1"/>
</dbReference>
<dbReference type="PANTHER" id="PTHR43345">
    <property type="entry name" value="3-ISOPROPYLMALATE DEHYDRATASE SMALL SUBUNIT 2-RELATED-RELATED"/>
    <property type="match status" value="1"/>
</dbReference>
<dbReference type="Pfam" id="PF00694">
    <property type="entry name" value="Aconitase_C"/>
    <property type="match status" value="1"/>
</dbReference>
<dbReference type="SUPFAM" id="SSF52016">
    <property type="entry name" value="LeuD/IlvD-like"/>
    <property type="match status" value="1"/>
</dbReference>
<reference key="1">
    <citation type="submission" date="2008-02" db="EMBL/GenBank/DDBJ databases">
        <title>Complete sequence of Haemophilus somnus 2336.</title>
        <authorList>
            <consortium name="US DOE Joint Genome Institute"/>
            <person name="Siddaramappa S."/>
            <person name="Duncan A.J."/>
            <person name="Challacombe J.F."/>
            <person name="Rainey D."/>
            <person name="Gillaspy A.F."/>
            <person name="Carson M."/>
            <person name="Gipson J."/>
            <person name="Gipson M."/>
            <person name="Bruce D."/>
            <person name="Detter J.C."/>
            <person name="Han C.S."/>
            <person name="Land M."/>
            <person name="Tapia R."/>
            <person name="Thompson L.S."/>
            <person name="Orvis J."/>
            <person name="Zaitshik J."/>
            <person name="Barnes G."/>
            <person name="Brettin T.S."/>
            <person name="Dyer D.W."/>
            <person name="Inzana T.J."/>
        </authorList>
    </citation>
    <scope>NUCLEOTIDE SEQUENCE [LARGE SCALE GENOMIC DNA]</scope>
    <source>
        <strain>2336</strain>
    </source>
</reference>
<organism>
    <name type="scientific">Histophilus somni (strain 2336)</name>
    <name type="common">Haemophilus somnus</name>
    <dbReference type="NCBI Taxonomy" id="228400"/>
    <lineage>
        <taxon>Bacteria</taxon>
        <taxon>Pseudomonadati</taxon>
        <taxon>Pseudomonadota</taxon>
        <taxon>Gammaproteobacteria</taxon>
        <taxon>Pasteurellales</taxon>
        <taxon>Pasteurellaceae</taxon>
        <taxon>Histophilus</taxon>
    </lineage>
</organism>
<sequence>MAGIKQHSGLVVPLDAANVDTDAIIPKQFLQAITRVGFGKHLFHEWRYLDEEGTVPNPKFVLNFPEYQGATILLARKNLGCGSSREHAPWALADYGFKVMIAPSFADIFYNNSLNNHMLPIRLNEEEVEEIFQWVWKNKGCEIHVNLENLTVTTGNKIYHFELDEFRRHCLLNGLDNIGLTLQHEDKIAEYEKNIPAFLR</sequence>
<evidence type="ECO:0000255" key="1">
    <source>
        <dbReference type="HAMAP-Rule" id="MF_01031"/>
    </source>
</evidence>
<keyword id="KW-0028">Amino-acid biosynthesis</keyword>
<keyword id="KW-0100">Branched-chain amino acid biosynthesis</keyword>
<keyword id="KW-0432">Leucine biosynthesis</keyword>
<keyword id="KW-0456">Lyase</keyword>
<accession>B0USF3</accession>